<feature type="chain" id="PRO_0000235038" description="Serine hydroxymethyltransferase">
    <location>
        <begin position="1"/>
        <end position="427"/>
    </location>
</feature>
<feature type="binding site" evidence="1">
    <location>
        <position position="122"/>
    </location>
    <ligand>
        <name>(6S)-5,6,7,8-tetrahydrofolate</name>
        <dbReference type="ChEBI" id="CHEBI:57453"/>
    </ligand>
</feature>
<feature type="binding site" evidence="1">
    <location>
        <begin position="126"/>
        <end position="128"/>
    </location>
    <ligand>
        <name>(6S)-5,6,7,8-tetrahydrofolate</name>
        <dbReference type="ChEBI" id="CHEBI:57453"/>
    </ligand>
</feature>
<feature type="binding site" evidence="1">
    <location>
        <begin position="355"/>
        <end position="357"/>
    </location>
    <ligand>
        <name>(6S)-5,6,7,8-tetrahydrofolate</name>
        <dbReference type="ChEBI" id="CHEBI:57453"/>
    </ligand>
</feature>
<feature type="site" description="Plays an important role in substrate specificity" evidence="1">
    <location>
        <position position="230"/>
    </location>
</feature>
<feature type="modified residue" description="N6-(pyridoxal phosphate)lysine" evidence="1">
    <location>
        <position position="231"/>
    </location>
</feature>
<proteinExistence type="inferred from homology"/>
<organism>
    <name type="scientific">Synechococcus sp. (strain ATCC 27144 / PCC 6301 / SAUG 1402/1)</name>
    <name type="common">Anacystis nidulans</name>
    <dbReference type="NCBI Taxonomy" id="269084"/>
    <lineage>
        <taxon>Bacteria</taxon>
        <taxon>Bacillati</taxon>
        <taxon>Cyanobacteriota</taxon>
        <taxon>Cyanophyceae</taxon>
        <taxon>Synechococcales</taxon>
        <taxon>Synechococcaceae</taxon>
        <taxon>Synechococcus</taxon>
    </lineage>
</organism>
<protein>
    <recommendedName>
        <fullName evidence="1">Serine hydroxymethyltransferase</fullName>
        <shortName evidence="1">SHMT</shortName>
        <shortName evidence="1">Serine methylase</shortName>
        <ecNumber evidence="1">2.1.2.1</ecNumber>
    </recommendedName>
</protein>
<dbReference type="EC" id="2.1.2.1" evidence="1"/>
<dbReference type="EMBL" id="AP008231">
    <property type="protein sequence ID" value="BAD79421.1"/>
    <property type="status" value="ALT_INIT"/>
    <property type="molecule type" value="Genomic_DNA"/>
</dbReference>
<dbReference type="RefSeq" id="WP_011243543.1">
    <property type="nucleotide sequence ID" value="NZ_CP085785.1"/>
</dbReference>
<dbReference type="SMR" id="Q5N2P9"/>
<dbReference type="GeneID" id="72429097"/>
<dbReference type="KEGG" id="syc:syc1231_d"/>
<dbReference type="eggNOG" id="COG0112">
    <property type="taxonomic scope" value="Bacteria"/>
</dbReference>
<dbReference type="UniPathway" id="UPA00193"/>
<dbReference type="UniPathway" id="UPA00288">
    <property type="reaction ID" value="UER01023"/>
</dbReference>
<dbReference type="Proteomes" id="UP000001175">
    <property type="component" value="Chromosome"/>
</dbReference>
<dbReference type="GO" id="GO:0005829">
    <property type="term" value="C:cytosol"/>
    <property type="evidence" value="ECO:0007669"/>
    <property type="project" value="TreeGrafter"/>
</dbReference>
<dbReference type="GO" id="GO:0004372">
    <property type="term" value="F:glycine hydroxymethyltransferase activity"/>
    <property type="evidence" value="ECO:0007669"/>
    <property type="project" value="UniProtKB-UniRule"/>
</dbReference>
<dbReference type="GO" id="GO:0030170">
    <property type="term" value="F:pyridoxal phosphate binding"/>
    <property type="evidence" value="ECO:0007669"/>
    <property type="project" value="UniProtKB-UniRule"/>
</dbReference>
<dbReference type="GO" id="GO:0019264">
    <property type="term" value="P:glycine biosynthetic process from serine"/>
    <property type="evidence" value="ECO:0007669"/>
    <property type="project" value="UniProtKB-UniRule"/>
</dbReference>
<dbReference type="GO" id="GO:0035999">
    <property type="term" value="P:tetrahydrofolate interconversion"/>
    <property type="evidence" value="ECO:0007669"/>
    <property type="project" value="UniProtKB-UniRule"/>
</dbReference>
<dbReference type="CDD" id="cd00378">
    <property type="entry name" value="SHMT"/>
    <property type="match status" value="1"/>
</dbReference>
<dbReference type="FunFam" id="3.40.640.10:FF:000001">
    <property type="entry name" value="Serine hydroxymethyltransferase"/>
    <property type="match status" value="1"/>
</dbReference>
<dbReference type="FunFam" id="3.90.1150.10:FF:000003">
    <property type="entry name" value="Serine hydroxymethyltransferase"/>
    <property type="match status" value="1"/>
</dbReference>
<dbReference type="Gene3D" id="3.90.1150.10">
    <property type="entry name" value="Aspartate Aminotransferase, domain 1"/>
    <property type="match status" value="1"/>
</dbReference>
<dbReference type="Gene3D" id="3.40.640.10">
    <property type="entry name" value="Type I PLP-dependent aspartate aminotransferase-like (Major domain)"/>
    <property type="match status" value="1"/>
</dbReference>
<dbReference type="HAMAP" id="MF_00051">
    <property type="entry name" value="SHMT"/>
    <property type="match status" value="1"/>
</dbReference>
<dbReference type="InterPro" id="IPR015424">
    <property type="entry name" value="PyrdxlP-dep_Trfase"/>
</dbReference>
<dbReference type="InterPro" id="IPR015421">
    <property type="entry name" value="PyrdxlP-dep_Trfase_major"/>
</dbReference>
<dbReference type="InterPro" id="IPR015422">
    <property type="entry name" value="PyrdxlP-dep_Trfase_small"/>
</dbReference>
<dbReference type="InterPro" id="IPR001085">
    <property type="entry name" value="Ser_HO-MeTrfase"/>
</dbReference>
<dbReference type="InterPro" id="IPR049943">
    <property type="entry name" value="Ser_HO-MeTrfase-like"/>
</dbReference>
<dbReference type="InterPro" id="IPR019798">
    <property type="entry name" value="Ser_HO-MeTrfase_PLP_BS"/>
</dbReference>
<dbReference type="InterPro" id="IPR039429">
    <property type="entry name" value="SHMT-like_dom"/>
</dbReference>
<dbReference type="NCBIfam" id="NF000586">
    <property type="entry name" value="PRK00011.1"/>
    <property type="match status" value="1"/>
</dbReference>
<dbReference type="PANTHER" id="PTHR11680">
    <property type="entry name" value="SERINE HYDROXYMETHYLTRANSFERASE"/>
    <property type="match status" value="1"/>
</dbReference>
<dbReference type="PANTHER" id="PTHR11680:SF35">
    <property type="entry name" value="SERINE HYDROXYMETHYLTRANSFERASE 1"/>
    <property type="match status" value="1"/>
</dbReference>
<dbReference type="Pfam" id="PF00464">
    <property type="entry name" value="SHMT"/>
    <property type="match status" value="1"/>
</dbReference>
<dbReference type="PIRSF" id="PIRSF000412">
    <property type="entry name" value="SHMT"/>
    <property type="match status" value="1"/>
</dbReference>
<dbReference type="SUPFAM" id="SSF53383">
    <property type="entry name" value="PLP-dependent transferases"/>
    <property type="match status" value="1"/>
</dbReference>
<dbReference type="PROSITE" id="PS00096">
    <property type="entry name" value="SHMT"/>
    <property type="match status" value="1"/>
</dbReference>
<keyword id="KW-0028">Amino-acid biosynthesis</keyword>
<keyword id="KW-0963">Cytoplasm</keyword>
<keyword id="KW-0554">One-carbon metabolism</keyword>
<keyword id="KW-0663">Pyridoxal phosphate</keyword>
<keyword id="KW-0808">Transferase</keyword>
<evidence type="ECO:0000255" key="1">
    <source>
        <dbReference type="HAMAP-Rule" id="MF_00051"/>
    </source>
</evidence>
<evidence type="ECO:0000305" key="2"/>
<accession>Q5N2P9</accession>
<sequence length="427" mass="46187">MTETNFDFLAQGDPAIAAIIGRELQRQQEHLELIASENFASPAVMAAQGSVLTNKYAEGLPSKRYYGGCEFVDQAEELAIERAKELFGAAHANVQPHSGAQANFAVFLTLLQPGDTFLGMDLSHGGHLTHGSPVNVSGKWFNAGHYGVNRETERLDYDAIRELALQHRPKLIICGYSAYPRTIDFAKFREIADEVGAYLLADMAHIAGLVAAGLHPSPIPHCDVVTTTTHKTLRGPRGGLILTRDAELGKKLDKSVFPGTQGGPLEHVIAAKAVAFGEALRPEFKTYSAQVIANAQALARQLQARGLKIVSDGTDNHLLLVDLRSIGMTGKVADLLVSDVNITANKNTVPFDPESPFVTSGIRLGTAAMTTRGFKEAEFAIVADIIADRLLNPEDSSMEDSCRRRVLELCQRFPLYPHLSPATPVAV</sequence>
<reference key="1">
    <citation type="journal article" date="2007" name="Photosyn. Res.">
        <title>Complete nucleotide sequence of the freshwater unicellular cyanobacterium Synechococcus elongatus PCC 6301 chromosome: gene content and organization.</title>
        <authorList>
            <person name="Sugita C."/>
            <person name="Ogata K."/>
            <person name="Shikata M."/>
            <person name="Jikuya H."/>
            <person name="Takano J."/>
            <person name="Furumichi M."/>
            <person name="Kanehisa M."/>
            <person name="Omata T."/>
            <person name="Sugiura M."/>
            <person name="Sugita M."/>
        </authorList>
    </citation>
    <scope>NUCLEOTIDE SEQUENCE [LARGE SCALE GENOMIC DNA]</scope>
    <source>
        <strain>ATCC 27144 / PCC 6301 / SAUG 1402/1</strain>
    </source>
</reference>
<name>GLYA_SYNP6</name>
<comment type="function">
    <text evidence="1">Catalyzes the reversible interconversion of serine and glycine with tetrahydrofolate (THF) serving as the one-carbon carrier. This reaction serves as the major source of one-carbon groups required for the biosynthesis of purines, thymidylate, methionine, and other important biomolecules. Also exhibits THF-independent aldolase activity toward beta-hydroxyamino acids, producing glycine and aldehydes, via a retro-aldol mechanism.</text>
</comment>
<comment type="catalytic activity">
    <reaction evidence="1">
        <text>(6R)-5,10-methylene-5,6,7,8-tetrahydrofolate + glycine + H2O = (6S)-5,6,7,8-tetrahydrofolate + L-serine</text>
        <dbReference type="Rhea" id="RHEA:15481"/>
        <dbReference type="ChEBI" id="CHEBI:15377"/>
        <dbReference type="ChEBI" id="CHEBI:15636"/>
        <dbReference type="ChEBI" id="CHEBI:33384"/>
        <dbReference type="ChEBI" id="CHEBI:57305"/>
        <dbReference type="ChEBI" id="CHEBI:57453"/>
        <dbReference type="EC" id="2.1.2.1"/>
    </reaction>
</comment>
<comment type="cofactor">
    <cofactor evidence="1">
        <name>pyridoxal 5'-phosphate</name>
        <dbReference type="ChEBI" id="CHEBI:597326"/>
    </cofactor>
</comment>
<comment type="pathway">
    <text evidence="1">One-carbon metabolism; tetrahydrofolate interconversion.</text>
</comment>
<comment type="pathway">
    <text evidence="1">Amino-acid biosynthesis; glycine biosynthesis; glycine from L-serine: step 1/1.</text>
</comment>
<comment type="subunit">
    <text evidence="1">Homodimer.</text>
</comment>
<comment type="subcellular location">
    <subcellularLocation>
        <location evidence="1">Cytoplasm</location>
    </subcellularLocation>
</comment>
<comment type="similarity">
    <text evidence="1">Belongs to the SHMT family.</text>
</comment>
<comment type="sequence caution" evidence="2">
    <conflict type="erroneous initiation">
        <sequence resource="EMBL-CDS" id="BAD79421"/>
    </conflict>
</comment>
<gene>
    <name evidence="1" type="primary">glyA</name>
    <name type="ordered locus">syc1231_d</name>
</gene>